<proteinExistence type="inferred from homology"/>
<feature type="chain" id="PRO_0000301744" description="Topoisomerase 1-associated factor 1">
    <location>
        <begin position="1"/>
        <end position="1235"/>
    </location>
</feature>
<feature type="region of interest" description="Disordered" evidence="2">
    <location>
        <begin position="327"/>
        <end position="357"/>
    </location>
</feature>
<feature type="region of interest" description="Disordered" evidence="2">
    <location>
        <begin position="584"/>
        <end position="610"/>
    </location>
</feature>
<feature type="region of interest" description="Disordered" evidence="2">
    <location>
        <begin position="812"/>
        <end position="841"/>
    </location>
</feature>
<feature type="region of interest" description="Disordered" evidence="2">
    <location>
        <begin position="897"/>
        <end position="1235"/>
    </location>
</feature>
<feature type="compositionally biased region" description="Acidic residues" evidence="2">
    <location>
        <begin position="585"/>
        <end position="603"/>
    </location>
</feature>
<feature type="compositionally biased region" description="Acidic residues" evidence="2">
    <location>
        <begin position="929"/>
        <end position="947"/>
    </location>
</feature>
<feature type="compositionally biased region" description="Basic residues" evidence="2">
    <location>
        <begin position="964"/>
        <end position="973"/>
    </location>
</feature>
<feature type="compositionally biased region" description="Acidic residues" evidence="2">
    <location>
        <begin position="977"/>
        <end position="986"/>
    </location>
</feature>
<feature type="compositionally biased region" description="Basic and acidic residues" evidence="2">
    <location>
        <begin position="999"/>
        <end position="1044"/>
    </location>
</feature>
<feature type="compositionally biased region" description="Acidic residues" evidence="2">
    <location>
        <begin position="1070"/>
        <end position="1081"/>
    </location>
</feature>
<feature type="compositionally biased region" description="Acidic residues" evidence="2">
    <location>
        <begin position="1099"/>
        <end position="1118"/>
    </location>
</feature>
<feature type="compositionally biased region" description="Basic residues" evidence="2">
    <location>
        <begin position="1124"/>
        <end position="1150"/>
    </location>
</feature>
<feature type="compositionally biased region" description="Acidic residues" evidence="2">
    <location>
        <begin position="1156"/>
        <end position="1170"/>
    </location>
</feature>
<feature type="compositionally biased region" description="Basic and acidic residues" evidence="2">
    <location>
        <begin position="1193"/>
        <end position="1202"/>
    </location>
</feature>
<feature type="compositionally biased region" description="Acidic residues" evidence="2">
    <location>
        <begin position="1203"/>
        <end position="1212"/>
    </location>
</feature>
<organism>
    <name type="scientific">Neurospora crassa (strain ATCC 24698 / 74-OR23-1A / CBS 708.71 / DSM 1257 / FGSC 987)</name>
    <dbReference type="NCBI Taxonomy" id="367110"/>
    <lineage>
        <taxon>Eukaryota</taxon>
        <taxon>Fungi</taxon>
        <taxon>Dikarya</taxon>
        <taxon>Ascomycota</taxon>
        <taxon>Pezizomycotina</taxon>
        <taxon>Sordariomycetes</taxon>
        <taxon>Sordariomycetidae</taxon>
        <taxon>Sordariales</taxon>
        <taxon>Sordariaceae</taxon>
        <taxon>Neurospora</taxon>
    </lineage>
</organism>
<accession>Q7S2A9</accession>
<reference key="1">
    <citation type="journal article" date="2003" name="Nucleic Acids Res.">
        <title>What's in the genome of a filamentous fungus? Analysis of the Neurospora genome sequence.</title>
        <authorList>
            <person name="Mannhaupt G."/>
            <person name="Montrone C."/>
            <person name="Haase D."/>
            <person name="Mewes H.-W."/>
            <person name="Aign V."/>
            <person name="Hoheisel J.D."/>
            <person name="Fartmann B."/>
            <person name="Nyakatura G."/>
            <person name="Kempken F."/>
            <person name="Maier J."/>
            <person name="Schulte U."/>
        </authorList>
    </citation>
    <scope>NUCLEOTIDE SEQUENCE [LARGE SCALE GENOMIC DNA]</scope>
    <source>
        <strain>ATCC 24698 / 74-OR23-1A / CBS 708.71 / DSM 1257 / FGSC 987</strain>
    </source>
</reference>
<reference key="2">
    <citation type="journal article" date="2003" name="Nature">
        <title>The genome sequence of the filamentous fungus Neurospora crassa.</title>
        <authorList>
            <person name="Galagan J.E."/>
            <person name="Calvo S.E."/>
            <person name="Borkovich K.A."/>
            <person name="Selker E.U."/>
            <person name="Read N.D."/>
            <person name="Jaffe D.B."/>
            <person name="FitzHugh W."/>
            <person name="Ma L.-J."/>
            <person name="Smirnov S."/>
            <person name="Purcell S."/>
            <person name="Rehman B."/>
            <person name="Elkins T."/>
            <person name="Engels R."/>
            <person name="Wang S."/>
            <person name="Nielsen C.B."/>
            <person name="Butler J."/>
            <person name="Endrizzi M."/>
            <person name="Qui D."/>
            <person name="Ianakiev P."/>
            <person name="Bell-Pedersen D."/>
            <person name="Nelson M.A."/>
            <person name="Werner-Washburne M."/>
            <person name="Selitrennikoff C.P."/>
            <person name="Kinsey J.A."/>
            <person name="Braun E.L."/>
            <person name="Zelter A."/>
            <person name="Schulte U."/>
            <person name="Kothe G.O."/>
            <person name="Jedd G."/>
            <person name="Mewes H.-W."/>
            <person name="Staben C."/>
            <person name="Marcotte E."/>
            <person name="Greenberg D."/>
            <person name="Roy A."/>
            <person name="Foley K."/>
            <person name="Naylor J."/>
            <person name="Stange-Thomann N."/>
            <person name="Barrett R."/>
            <person name="Gnerre S."/>
            <person name="Kamal M."/>
            <person name="Kamvysselis M."/>
            <person name="Mauceli E.W."/>
            <person name="Bielke C."/>
            <person name="Rudd S."/>
            <person name="Frishman D."/>
            <person name="Krystofova S."/>
            <person name="Rasmussen C."/>
            <person name="Metzenberg R.L."/>
            <person name="Perkins D.D."/>
            <person name="Kroken S."/>
            <person name="Cogoni C."/>
            <person name="Macino G."/>
            <person name="Catcheside D.E.A."/>
            <person name="Li W."/>
            <person name="Pratt R.J."/>
            <person name="Osmani S.A."/>
            <person name="DeSouza C.P.C."/>
            <person name="Glass N.L."/>
            <person name="Orbach M.J."/>
            <person name="Berglund J.A."/>
            <person name="Voelker R."/>
            <person name="Yarden O."/>
            <person name="Plamann M."/>
            <person name="Seiler S."/>
            <person name="Dunlap J.C."/>
            <person name="Radford A."/>
            <person name="Aramayo R."/>
            <person name="Natvig D.O."/>
            <person name="Alex L.A."/>
            <person name="Mannhaupt G."/>
            <person name="Ebbole D.J."/>
            <person name="Freitag M."/>
            <person name="Paulsen I."/>
            <person name="Sachs M.S."/>
            <person name="Lander E.S."/>
            <person name="Nusbaum C."/>
            <person name="Birren B.W."/>
        </authorList>
    </citation>
    <scope>NUCLEOTIDE SEQUENCE [LARGE SCALE GENOMIC DNA]</scope>
    <source>
        <strain>ATCC 24698 / 74-OR23-1A / CBS 708.71 / DSM 1257 / FGSC 987</strain>
    </source>
</reference>
<comment type="function">
    <text evidence="1">Forms a fork protection complex (FPC) with csm-3 and which is required for chromosome segregation during meiosis and DNA damage repair. FPC coordinates leading and lagging strand synthesis and moves with the replication fork. FPC stabilizes replication forks in a configuration that is recognized by replication checkpoint sensors (By similarity).</text>
</comment>
<comment type="subunit">
    <text evidence="1">Component of the fork protection complex (FPC) consisting of tof-1 and csm-3.</text>
</comment>
<comment type="subcellular location">
    <subcellularLocation>
        <location evidence="1">Nucleus</location>
    </subcellularLocation>
</comment>
<comment type="similarity">
    <text evidence="3">Belongs to the timeless family.</text>
</comment>
<dbReference type="EMBL" id="BX842620">
    <property type="protein sequence ID" value="CAE76157.1"/>
    <property type="molecule type" value="Genomic_DNA"/>
</dbReference>
<dbReference type="EMBL" id="CM002240">
    <property type="protein sequence ID" value="EAA29535.1"/>
    <property type="molecule type" value="Genomic_DNA"/>
</dbReference>
<dbReference type="RefSeq" id="XP_958771.1">
    <property type="nucleotide sequence ID" value="XM_953678.2"/>
</dbReference>
<dbReference type="SMR" id="Q7S2A9"/>
<dbReference type="FunCoup" id="Q7S2A9">
    <property type="interactions" value="43"/>
</dbReference>
<dbReference type="STRING" id="367110.Q7S2A9"/>
<dbReference type="PaxDb" id="5141-EFNCRP00000007616"/>
<dbReference type="EnsemblFungi" id="EAA29535">
    <property type="protein sequence ID" value="EAA29535"/>
    <property type="gene ID" value="NCU09552"/>
</dbReference>
<dbReference type="GeneID" id="3874918"/>
<dbReference type="KEGG" id="ncr:NCU09552"/>
<dbReference type="VEuPathDB" id="FungiDB:NCU09552"/>
<dbReference type="HOGENOM" id="CLU_004390_0_0_1"/>
<dbReference type="InParanoid" id="Q7S2A9"/>
<dbReference type="OMA" id="VNHHRHT"/>
<dbReference type="OrthoDB" id="310853at2759"/>
<dbReference type="Proteomes" id="UP000001805">
    <property type="component" value="Chromosome 2, Linkage Group V"/>
</dbReference>
<dbReference type="GO" id="GO:0031298">
    <property type="term" value="C:replication fork protection complex"/>
    <property type="evidence" value="ECO:0000318"/>
    <property type="project" value="GO_Central"/>
</dbReference>
<dbReference type="GO" id="GO:0003677">
    <property type="term" value="F:DNA binding"/>
    <property type="evidence" value="ECO:0000318"/>
    <property type="project" value="GO_Central"/>
</dbReference>
<dbReference type="GO" id="GO:0006281">
    <property type="term" value="P:DNA repair"/>
    <property type="evidence" value="ECO:0000318"/>
    <property type="project" value="GO_Central"/>
</dbReference>
<dbReference type="GO" id="GO:0000076">
    <property type="term" value="P:DNA replication checkpoint signaling"/>
    <property type="evidence" value="ECO:0000318"/>
    <property type="project" value="GO_Central"/>
</dbReference>
<dbReference type="GO" id="GO:0051321">
    <property type="term" value="P:meiotic cell cycle"/>
    <property type="evidence" value="ECO:0007669"/>
    <property type="project" value="UniProtKB-KW"/>
</dbReference>
<dbReference type="GO" id="GO:0043111">
    <property type="term" value="P:replication fork arrest"/>
    <property type="evidence" value="ECO:0000318"/>
    <property type="project" value="GO_Central"/>
</dbReference>
<dbReference type="InterPro" id="IPR016024">
    <property type="entry name" value="ARM-type_fold"/>
</dbReference>
<dbReference type="InterPro" id="IPR044998">
    <property type="entry name" value="Timeless"/>
</dbReference>
<dbReference type="InterPro" id="IPR006906">
    <property type="entry name" value="Timeless_N"/>
</dbReference>
<dbReference type="PANTHER" id="PTHR22940:SF4">
    <property type="entry name" value="PROTEIN TIMELESS HOMOLOG"/>
    <property type="match status" value="1"/>
</dbReference>
<dbReference type="PANTHER" id="PTHR22940">
    <property type="entry name" value="TIMEOUT/TIMELESS-2"/>
    <property type="match status" value="1"/>
</dbReference>
<dbReference type="Pfam" id="PF04821">
    <property type="entry name" value="TIMELESS"/>
    <property type="match status" value="1"/>
</dbReference>
<dbReference type="SUPFAM" id="SSF48371">
    <property type="entry name" value="ARM repeat"/>
    <property type="match status" value="1"/>
</dbReference>
<evidence type="ECO:0000250" key="1"/>
<evidence type="ECO:0000256" key="2">
    <source>
        <dbReference type="SAM" id="MobiDB-lite"/>
    </source>
</evidence>
<evidence type="ECO:0000305" key="3"/>
<keyword id="KW-0131">Cell cycle</keyword>
<keyword id="KW-0227">DNA damage</keyword>
<keyword id="KW-0234">DNA repair</keyword>
<keyword id="KW-0236">DNA replication inhibitor</keyword>
<keyword id="KW-0469">Meiosis</keyword>
<keyword id="KW-0539">Nucleus</keyword>
<keyword id="KW-1185">Reference proteome</keyword>
<protein>
    <recommendedName>
        <fullName>Topoisomerase 1-associated factor 1</fullName>
    </recommendedName>
</protein>
<name>TOF1_NEUCR</name>
<gene>
    <name type="primary">tof-1</name>
    <name type="ORF">B11E5.220</name>
    <name type="ORF">NCU09552</name>
</gene>
<sequence>MEAADINDDVVHPEVRAHITNLVSALGGYSADDDGSYKLGDEALDVLRDLKKWIRFYDEKTNRMDVARCLAEANLVGGDLLQILTLWPQSETDSKYKARIALACFEVMVPLTWPIEKERAEMTINHHRHMPVLQLAQLGYKRAIINFDAIPILNTAVRVALPSMAMPIGERTPRDQAIIKLILFFLRNVAMIAPPQGVKCEGDETQVSRSATIDAFSYQDIFLTLLTLASNMGEDFRTEDVVIMEIIFHLVKRVDPSSLFVSEKQLNKAKGQELASEMRKEAAMLKSYNKTTTTRHSRFGTMIWVKRADGKMVTVSGQEALLDAKTRERKMDNSKTFRPPRRARKPEMEPKDLGPPVTLDERARQQLRSFVQDFLDSGFNPLFLHVRQSIDREALHALNQHKSQFFYLVAWFLEAERMRRKAKRDESKSTSAAGEEVNSFNLVAAVLQQEMFASMNRALDRSYSDKDWQLLTSVMRCYTQIFLTVQEMSESPNEEDQEIAENTLSRLFYEETTHDLIANIARTYKDQGFEYLDAATELVHTFLRILEGYSKQNVDLQVRSRKRARRKKKAAKAAAAVAAARAAGEEAEDVGVPEDNDADDSGDDEQHAERVTQERKFEFGKFAIRFAPQGVVDTFVAFTKFYRDLNDAQLKRAHRYFYRVAFKLELSIMLFRLDIINLFYNMVQGPEPLDKSSPMFKEWEELSKQIIRKCVKKLQERPALFTELLFSKIGSTTHFLEHGYEKPVTTTTPRPGAELEFKRATERDEQIGIAVSVLIDKQQVEHLQWLKDQLTSAMSERQAWENVDKAMAATTEGAADGEAADERSNKSAPPHITIRPDTEARRTAMFKNPHLRLLMRLVGMERLTPTLDETPDSTWILPGSHTAEAIQDTIDLINKAEFSPPTFEDGGSAEDQLRRKSAAASRRTRAAYDDDEEEIRGFLGDDDDEDFLFAPGGPTARKPDARPQKKRQRKRRREAGSGDEEDEGVSDEVLAARAKKRREKELEKIRKIKSEMYVHASDDETDDERDREFFERERKRQETKDSKFDSMLGALGLSVLSQVNGGEKSAWEAVLDDEPESDESENEGRKNAKRRKKQVASGSEEEQEEEEEEEEEEDSDEELPTKQAKSKTSKRKAAVPSKRPARRPGTAKKRAVVELSDNDEDEDEEEDAMDVDSANERTTRNEAPLPSSPGEGLGRRIDKMAMDDGDEDEDDQPVVAARQRPKARGGFIIDSSDEE</sequence>